<protein>
    <recommendedName>
        <fullName evidence="1">Large ribosomal subunit protein bL12</fullName>
    </recommendedName>
    <alternativeName>
        <fullName evidence="2">50S ribosomal protein L7/L12</fullName>
    </alternativeName>
</protein>
<evidence type="ECO:0000255" key="1">
    <source>
        <dbReference type="HAMAP-Rule" id="MF_00368"/>
    </source>
</evidence>
<evidence type="ECO:0000305" key="2"/>
<reference key="1">
    <citation type="journal article" date="2009" name="PLoS Pathog.">
        <title>Genomic evidence for the evolution of Streptococcus equi: host restriction, increased virulence, and genetic exchange with human pathogens.</title>
        <authorList>
            <person name="Holden M.T.G."/>
            <person name="Heather Z."/>
            <person name="Paillot R."/>
            <person name="Steward K.F."/>
            <person name="Webb K."/>
            <person name="Ainslie F."/>
            <person name="Jourdan T."/>
            <person name="Bason N.C."/>
            <person name="Holroyd N.E."/>
            <person name="Mungall K."/>
            <person name="Quail M.A."/>
            <person name="Sanders M."/>
            <person name="Simmonds M."/>
            <person name="Willey D."/>
            <person name="Brooks K."/>
            <person name="Aanensen D.M."/>
            <person name="Spratt B.G."/>
            <person name="Jolley K.A."/>
            <person name="Maiden M.C.J."/>
            <person name="Kehoe M."/>
            <person name="Chanter N."/>
            <person name="Bentley S.D."/>
            <person name="Robinson C."/>
            <person name="Maskell D.J."/>
            <person name="Parkhill J."/>
            <person name="Waller A.S."/>
        </authorList>
    </citation>
    <scope>NUCLEOTIDE SEQUENCE [LARGE SCALE GENOMIC DNA]</scope>
    <source>
        <strain>H70</strain>
    </source>
</reference>
<gene>
    <name evidence="1" type="primary">rplL</name>
    <name type="ordered locus">SZO_07560</name>
</gene>
<accession>C0MDT8</accession>
<organism>
    <name type="scientific">Streptococcus equi subsp. zooepidemicus (strain H70)</name>
    <dbReference type="NCBI Taxonomy" id="553483"/>
    <lineage>
        <taxon>Bacteria</taxon>
        <taxon>Bacillati</taxon>
        <taxon>Bacillota</taxon>
        <taxon>Bacilli</taxon>
        <taxon>Lactobacillales</taxon>
        <taxon>Streptococcaceae</taxon>
        <taxon>Streptococcus</taxon>
    </lineage>
</organism>
<feature type="chain" id="PRO_1000205569" description="Large ribosomal subunit protein bL12">
    <location>
        <begin position="1"/>
        <end position="121"/>
    </location>
</feature>
<sequence length="121" mass="12328">MALNIENIIAEIKEASILELNDLVKAIEEEFGVTAAAPVAVAAAGGAEEATKDSFDVELTSAGDKKVGVIKAVREITGLGLKEAKGLVDGAPANIKEGVAAAEAEEIKAKLEEAGATITLK</sequence>
<keyword id="KW-0687">Ribonucleoprotein</keyword>
<keyword id="KW-0689">Ribosomal protein</keyword>
<proteinExistence type="inferred from homology"/>
<dbReference type="EMBL" id="FM204884">
    <property type="protein sequence ID" value="CAW98898.1"/>
    <property type="molecule type" value="Genomic_DNA"/>
</dbReference>
<dbReference type="SMR" id="C0MDT8"/>
<dbReference type="KEGG" id="seq:SZO_07560"/>
<dbReference type="eggNOG" id="COG0222">
    <property type="taxonomic scope" value="Bacteria"/>
</dbReference>
<dbReference type="HOGENOM" id="CLU_086499_3_2_9"/>
<dbReference type="Proteomes" id="UP000001368">
    <property type="component" value="Chromosome"/>
</dbReference>
<dbReference type="GO" id="GO:0022625">
    <property type="term" value="C:cytosolic large ribosomal subunit"/>
    <property type="evidence" value="ECO:0007669"/>
    <property type="project" value="TreeGrafter"/>
</dbReference>
<dbReference type="GO" id="GO:0003729">
    <property type="term" value="F:mRNA binding"/>
    <property type="evidence" value="ECO:0007669"/>
    <property type="project" value="TreeGrafter"/>
</dbReference>
<dbReference type="GO" id="GO:0003735">
    <property type="term" value="F:structural constituent of ribosome"/>
    <property type="evidence" value="ECO:0007669"/>
    <property type="project" value="InterPro"/>
</dbReference>
<dbReference type="GO" id="GO:0006412">
    <property type="term" value="P:translation"/>
    <property type="evidence" value="ECO:0007669"/>
    <property type="project" value="UniProtKB-UniRule"/>
</dbReference>
<dbReference type="CDD" id="cd00387">
    <property type="entry name" value="Ribosomal_L7_L12"/>
    <property type="match status" value="1"/>
</dbReference>
<dbReference type="FunFam" id="1.20.5.710:FF:000002">
    <property type="entry name" value="50S ribosomal protein L7/L12"/>
    <property type="match status" value="1"/>
</dbReference>
<dbReference type="FunFam" id="3.30.1390.10:FF:000001">
    <property type="entry name" value="50S ribosomal protein L7/L12"/>
    <property type="match status" value="1"/>
</dbReference>
<dbReference type="Gene3D" id="3.30.1390.10">
    <property type="match status" value="1"/>
</dbReference>
<dbReference type="Gene3D" id="1.20.5.710">
    <property type="entry name" value="Single helix bin"/>
    <property type="match status" value="1"/>
</dbReference>
<dbReference type="HAMAP" id="MF_00368">
    <property type="entry name" value="Ribosomal_bL12"/>
    <property type="match status" value="1"/>
</dbReference>
<dbReference type="InterPro" id="IPR000206">
    <property type="entry name" value="Ribosomal_bL12"/>
</dbReference>
<dbReference type="InterPro" id="IPR013823">
    <property type="entry name" value="Ribosomal_bL12_C"/>
</dbReference>
<dbReference type="InterPro" id="IPR014719">
    <property type="entry name" value="Ribosomal_bL12_C/ClpS-like"/>
</dbReference>
<dbReference type="InterPro" id="IPR008932">
    <property type="entry name" value="Ribosomal_bL12_oligo"/>
</dbReference>
<dbReference type="InterPro" id="IPR036235">
    <property type="entry name" value="Ribosomal_bL12_oligo_N_sf"/>
</dbReference>
<dbReference type="NCBIfam" id="TIGR00855">
    <property type="entry name" value="L12"/>
    <property type="match status" value="1"/>
</dbReference>
<dbReference type="PANTHER" id="PTHR45987">
    <property type="entry name" value="39S RIBOSOMAL PROTEIN L12"/>
    <property type="match status" value="1"/>
</dbReference>
<dbReference type="PANTHER" id="PTHR45987:SF4">
    <property type="entry name" value="LARGE RIBOSOMAL SUBUNIT PROTEIN BL12M"/>
    <property type="match status" value="1"/>
</dbReference>
<dbReference type="Pfam" id="PF00542">
    <property type="entry name" value="Ribosomal_L12"/>
    <property type="match status" value="1"/>
</dbReference>
<dbReference type="Pfam" id="PF16320">
    <property type="entry name" value="Ribosomal_L12_N"/>
    <property type="match status" value="1"/>
</dbReference>
<dbReference type="SUPFAM" id="SSF54736">
    <property type="entry name" value="ClpS-like"/>
    <property type="match status" value="1"/>
</dbReference>
<dbReference type="SUPFAM" id="SSF48300">
    <property type="entry name" value="Ribosomal protein L7/12, oligomerisation (N-terminal) domain"/>
    <property type="match status" value="1"/>
</dbReference>
<name>RL7_STRS7</name>
<comment type="function">
    <text evidence="1">Forms part of the ribosomal stalk which helps the ribosome interact with GTP-bound translation factors. Is thus essential for accurate translation.</text>
</comment>
<comment type="subunit">
    <text evidence="1">Homodimer. Part of the ribosomal stalk of the 50S ribosomal subunit. Forms a multimeric L10(L12)X complex, where L10 forms an elongated spine to which 2 to 4 L12 dimers bind in a sequential fashion. Binds GTP-bound translation factors.</text>
</comment>
<comment type="similarity">
    <text evidence="1">Belongs to the bacterial ribosomal protein bL12 family.</text>
</comment>